<keyword id="KW-0687">Ribonucleoprotein</keyword>
<keyword id="KW-0689">Ribosomal protein</keyword>
<keyword id="KW-0694">RNA-binding</keyword>
<keyword id="KW-0699">rRNA-binding</keyword>
<keyword id="KW-0820">tRNA-binding</keyword>
<protein>
    <recommendedName>
        <fullName evidence="1">Small ribosomal subunit protein uS7</fullName>
    </recommendedName>
    <alternativeName>
        <fullName evidence="2">30S ribosomal protein S7</fullName>
    </alternativeName>
</protein>
<sequence length="156" mass="17700">MRRRKAPVREVMPDPIYGNKIITKFINSLMYDGKKSVATEIMYGALKTIDAKGGDLKGINVFNDAIDNVKPIMEVKSRRVGGATYQVPVEVRPARQQALAIRWIISFARKRSERTMMEKLAAELLDAANSKGASFKKKEDTYKMAEANKAFAHYRW</sequence>
<dbReference type="EMBL" id="CP000487">
    <property type="protein sequence ID" value="ABK83395.1"/>
    <property type="molecule type" value="Genomic_DNA"/>
</dbReference>
<dbReference type="RefSeq" id="WP_002850109.1">
    <property type="nucleotide sequence ID" value="NC_008599.1"/>
</dbReference>
<dbReference type="SMR" id="A0RQI1"/>
<dbReference type="GeneID" id="61065131"/>
<dbReference type="KEGG" id="cff:CFF8240_1312"/>
<dbReference type="eggNOG" id="COG0049">
    <property type="taxonomic scope" value="Bacteria"/>
</dbReference>
<dbReference type="HOGENOM" id="CLU_072226_1_1_7"/>
<dbReference type="Proteomes" id="UP000000760">
    <property type="component" value="Chromosome"/>
</dbReference>
<dbReference type="GO" id="GO:0015935">
    <property type="term" value="C:small ribosomal subunit"/>
    <property type="evidence" value="ECO:0007669"/>
    <property type="project" value="InterPro"/>
</dbReference>
<dbReference type="GO" id="GO:0019843">
    <property type="term" value="F:rRNA binding"/>
    <property type="evidence" value="ECO:0007669"/>
    <property type="project" value="UniProtKB-UniRule"/>
</dbReference>
<dbReference type="GO" id="GO:0003735">
    <property type="term" value="F:structural constituent of ribosome"/>
    <property type="evidence" value="ECO:0007669"/>
    <property type="project" value="InterPro"/>
</dbReference>
<dbReference type="GO" id="GO:0000049">
    <property type="term" value="F:tRNA binding"/>
    <property type="evidence" value="ECO:0007669"/>
    <property type="project" value="UniProtKB-UniRule"/>
</dbReference>
<dbReference type="GO" id="GO:0006412">
    <property type="term" value="P:translation"/>
    <property type="evidence" value="ECO:0007669"/>
    <property type="project" value="UniProtKB-UniRule"/>
</dbReference>
<dbReference type="CDD" id="cd14869">
    <property type="entry name" value="uS7_Bacteria"/>
    <property type="match status" value="1"/>
</dbReference>
<dbReference type="FunFam" id="1.10.455.10:FF:000001">
    <property type="entry name" value="30S ribosomal protein S7"/>
    <property type="match status" value="1"/>
</dbReference>
<dbReference type="Gene3D" id="1.10.455.10">
    <property type="entry name" value="Ribosomal protein S7 domain"/>
    <property type="match status" value="1"/>
</dbReference>
<dbReference type="HAMAP" id="MF_00480_B">
    <property type="entry name" value="Ribosomal_uS7_B"/>
    <property type="match status" value="1"/>
</dbReference>
<dbReference type="InterPro" id="IPR000235">
    <property type="entry name" value="Ribosomal_uS7"/>
</dbReference>
<dbReference type="InterPro" id="IPR005717">
    <property type="entry name" value="Ribosomal_uS7_bac/org-type"/>
</dbReference>
<dbReference type="InterPro" id="IPR020606">
    <property type="entry name" value="Ribosomal_uS7_CS"/>
</dbReference>
<dbReference type="InterPro" id="IPR023798">
    <property type="entry name" value="Ribosomal_uS7_dom"/>
</dbReference>
<dbReference type="InterPro" id="IPR036823">
    <property type="entry name" value="Ribosomal_uS7_dom_sf"/>
</dbReference>
<dbReference type="NCBIfam" id="TIGR01029">
    <property type="entry name" value="rpsG_bact"/>
    <property type="match status" value="1"/>
</dbReference>
<dbReference type="PANTHER" id="PTHR11205">
    <property type="entry name" value="RIBOSOMAL PROTEIN S7"/>
    <property type="match status" value="1"/>
</dbReference>
<dbReference type="Pfam" id="PF00177">
    <property type="entry name" value="Ribosomal_S7"/>
    <property type="match status" value="1"/>
</dbReference>
<dbReference type="PIRSF" id="PIRSF002122">
    <property type="entry name" value="RPS7p_RPS7a_RPS5e_RPS7o"/>
    <property type="match status" value="1"/>
</dbReference>
<dbReference type="SUPFAM" id="SSF47973">
    <property type="entry name" value="Ribosomal protein S7"/>
    <property type="match status" value="1"/>
</dbReference>
<dbReference type="PROSITE" id="PS00052">
    <property type="entry name" value="RIBOSOMAL_S7"/>
    <property type="match status" value="1"/>
</dbReference>
<comment type="function">
    <text evidence="1">One of the primary rRNA binding proteins, it binds directly to 16S rRNA where it nucleates assembly of the head domain of the 30S subunit. Is located at the subunit interface close to the decoding center, probably blocks exit of the E-site tRNA.</text>
</comment>
<comment type="subunit">
    <text evidence="1">Part of the 30S ribosomal subunit. Contacts proteins S9 and S11.</text>
</comment>
<comment type="similarity">
    <text evidence="1">Belongs to the universal ribosomal protein uS7 family.</text>
</comment>
<evidence type="ECO:0000255" key="1">
    <source>
        <dbReference type="HAMAP-Rule" id="MF_00480"/>
    </source>
</evidence>
<evidence type="ECO:0000305" key="2"/>
<reference key="1">
    <citation type="submission" date="2006-11" db="EMBL/GenBank/DDBJ databases">
        <title>Sequence of Campylobacter fetus subsp. fetus 82-40.</title>
        <authorList>
            <person name="Fouts D.E."/>
            <person name="Nelson K.E."/>
        </authorList>
    </citation>
    <scope>NUCLEOTIDE SEQUENCE [LARGE SCALE GENOMIC DNA]</scope>
    <source>
        <strain>82-40</strain>
    </source>
</reference>
<accession>A0RQI1</accession>
<name>RS7_CAMFF</name>
<organism>
    <name type="scientific">Campylobacter fetus subsp. fetus (strain 82-40)</name>
    <dbReference type="NCBI Taxonomy" id="360106"/>
    <lineage>
        <taxon>Bacteria</taxon>
        <taxon>Pseudomonadati</taxon>
        <taxon>Campylobacterota</taxon>
        <taxon>Epsilonproteobacteria</taxon>
        <taxon>Campylobacterales</taxon>
        <taxon>Campylobacteraceae</taxon>
        <taxon>Campylobacter</taxon>
    </lineage>
</organism>
<gene>
    <name evidence="1" type="primary">rpsG</name>
    <name type="ordered locus">CFF8240_1312</name>
</gene>
<feature type="chain" id="PRO_1000014167" description="Small ribosomal subunit protein uS7">
    <location>
        <begin position="1"/>
        <end position="156"/>
    </location>
</feature>
<proteinExistence type="inferred from homology"/>